<feature type="chain" id="PRO_0000267745" description="3-hydroxydecanoyl-[acyl-carrier-protein] dehydratase">
    <location>
        <begin position="1"/>
        <end position="176"/>
    </location>
</feature>
<feature type="active site" evidence="1">
    <location>
        <position position="71"/>
    </location>
</feature>
<evidence type="ECO:0000255" key="1">
    <source>
        <dbReference type="HAMAP-Rule" id="MF_00405"/>
    </source>
</evidence>
<reference key="1">
    <citation type="submission" date="2006-03" db="EMBL/GenBank/DDBJ databases">
        <title>Complete sequence of Rhodopseudomonas palustris BisB18.</title>
        <authorList>
            <consortium name="US DOE Joint Genome Institute"/>
            <person name="Copeland A."/>
            <person name="Lucas S."/>
            <person name="Lapidus A."/>
            <person name="Barry K."/>
            <person name="Detter J.C."/>
            <person name="Glavina del Rio T."/>
            <person name="Hammon N."/>
            <person name="Israni S."/>
            <person name="Dalin E."/>
            <person name="Tice H."/>
            <person name="Pitluck S."/>
            <person name="Chain P."/>
            <person name="Malfatti S."/>
            <person name="Shin M."/>
            <person name="Vergez L."/>
            <person name="Schmutz J."/>
            <person name="Larimer F."/>
            <person name="Land M."/>
            <person name="Hauser L."/>
            <person name="Pelletier D.A."/>
            <person name="Kyrpides N."/>
            <person name="Anderson I."/>
            <person name="Oda Y."/>
            <person name="Harwood C.S."/>
            <person name="Richardson P."/>
        </authorList>
    </citation>
    <scope>NUCLEOTIDE SEQUENCE [LARGE SCALE GENOMIC DNA]</scope>
    <source>
        <strain>BisB18</strain>
    </source>
</reference>
<keyword id="KW-0963">Cytoplasm</keyword>
<keyword id="KW-0275">Fatty acid biosynthesis</keyword>
<keyword id="KW-0276">Fatty acid metabolism</keyword>
<keyword id="KW-0413">Isomerase</keyword>
<keyword id="KW-0444">Lipid biosynthesis</keyword>
<keyword id="KW-0443">Lipid metabolism</keyword>
<keyword id="KW-0456">Lyase</keyword>
<protein>
    <recommendedName>
        <fullName evidence="1">3-hydroxydecanoyl-[acyl-carrier-protein] dehydratase</fullName>
        <ecNumber evidence="1">4.2.1.59</ecNumber>
    </recommendedName>
    <alternativeName>
        <fullName evidence="1">3-hydroxyacyl-[acyl-carrier-protein] dehydratase FabA</fullName>
    </alternativeName>
    <alternativeName>
        <fullName evidence="1">Beta-hydroxydecanoyl thioester dehydrase</fullName>
    </alternativeName>
    <alternativeName>
        <fullName evidence="1">Trans-2-decenoyl-[acyl-carrier-protein] isomerase</fullName>
        <ecNumber evidence="1">5.3.3.14</ecNumber>
    </alternativeName>
</protein>
<sequence>MRDRRASYEYEDLLACGRGELFGPGNAQLPLPPMLMFDRIAEISETGGEHGKGLIRAELEVKPDLWFFGCHFKGDPVMPGCLGLDAMWQLVGFFLGWSGGIGPGRALGLGELKFSGQVQPNIKKVVYTIDIKRVMRSKLWLGIADGTLAADGEIFYRAKDLKVGLFKQTAAAQPAE</sequence>
<comment type="function">
    <text evidence="1">Necessary for the introduction of cis unsaturation into fatty acids. Catalyzes the dehydration of (3R)-3-hydroxydecanoyl-ACP to E-(2)-decenoyl-ACP and then its isomerization to Z-(3)-decenoyl-ACP. Can catalyze the dehydratase reaction for beta-hydroxyacyl-ACPs with saturated chain lengths up to 16:0, being most active on intermediate chain length.</text>
</comment>
<comment type="catalytic activity">
    <reaction evidence="1">
        <text>a (3R)-hydroxyacyl-[ACP] = a (2E)-enoyl-[ACP] + H2O</text>
        <dbReference type="Rhea" id="RHEA:13097"/>
        <dbReference type="Rhea" id="RHEA-COMP:9925"/>
        <dbReference type="Rhea" id="RHEA-COMP:9945"/>
        <dbReference type="ChEBI" id="CHEBI:15377"/>
        <dbReference type="ChEBI" id="CHEBI:78784"/>
        <dbReference type="ChEBI" id="CHEBI:78827"/>
        <dbReference type="EC" id="4.2.1.59"/>
    </reaction>
</comment>
<comment type="catalytic activity">
    <reaction evidence="1">
        <text>(3R)-hydroxydecanoyl-[ACP] = (2E)-decenoyl-[ACP] + H2O</text>
        <dbReference type="Rhea" id="RHEA:41860"/>
        <dbReference type="Rhea" id="RHEA-COMP:9638"/>
        <dbReference type="Rhea" id="RHEA-COMP:9639"/>
        <dbReference type="ChEBI" id="CHEBI:15377"/>
        <dbReference type="ChEBI" id="CHEBI:78466"/>
        <dbReference type="ChEBI" id="CHEBI:78467"/>
    </reaction>
</comment>
<comment type="catalytic activity">
    <reaction evidence="1">
        <text>(2E)-decenoyl-[ACP] = (3Z)-decenoyl-[ACP]</text>
        <dbReference type="Rhea" id="RHEA:23568"/>
        <dbReference type="Rhea" id="RHEA-COMP:9639"/>
        <dbReference type="Rhea" id="RHEA-COMP:9927"/>
        <dbReference type="ChEBI" id="CHEBI:78467"/>
        <dbReference type="ChEBI" id="CHEBI:78798"/>
        <dbReference type="EC" id="5.3.3.14"/>
    </reaction>
</comment>
<comment type="pathway">
    <text evidence="1">Lipid metabolism; fatty acid biosynthesis.</text>
</comment>
<comment type="subunit">
    <text evidence="1">Homodimer.</text>
</comment>
<comment type="subcellular location">
    <subcellularLocation>
        <location evidence="1">Cytoplasm</location>
    </subcellularLocation>
</comment>
<comment type="similarity">
    <text evidence="1">Belongs to the thioester dehydratase family. FabA subfamily.</text>
</comment>
<accession>Q21CG2</accession>
<proteinExistence type="inferred from homology"/>
<gene>
    <name evidence="1" type="primary">fabA</name>
    <name type="ordered locus">RPC_0349</name>
</gene>
<dbReference type="EC" id="4.2.1.59" evidence="1"/>
<dbReference type="EC" id="5.3.3.14" evidence="1"/>
<dbReference type="EMBL" id="CP000301">
    <property type="protein sequence ID" value="ABD85924.1"/>
    <property type="molecule type" value="Genomic_DNA"/>
</dbReference>
<dbReference type="SMR" id="Q21CG2"/>
<dbReference type="STRING" id="316056.RPC_0349"/>
<dbReference type="KEGG" id="rpc:RPC_0349"/>
<dbReference type="eggNOG" id="COG0764">
    <property type="taxonomic scope" value="Bacteria"/>
</dbReference>
<dbReference type="HOGENOM" id="CLU_097925_0_0_5"/>
<dbReference type="OrthoDB" id="9786735at2"/>
<dbReference type="UniPathway" id="UPA00094"/>
<dbReference type="GO" id="GO:0005737">
    <property type="term" value="C:cytoplasm"/>
    <property type="evidence" value="ECO:0007669"/>
    <property type="project" value="UniProtKB-SubCell"/>
</dbReference>
<dbReference type="GO" id="GO:0019171">
    <property type="term" value="F:(3R)-hydroxyacyl-[acyl-carrier-protein] dehydratase activity"/>
    <property type="evidence" value="ECO:0007669"/>
    <property type="project" value="UniProtKB-UniRule"/>
</dbReference>
<dbReference type="GO" id="GO:0034017">
    <property type="term" value="F:trans-2-decenoyl-acyl-carrier-protein isomerase activity"/>
    <property type="evidence" value="ECO:0007669"/>
    <property type="project" value="UniProtKB-UniRule"/>
</dbReference>
<dbReference type="GO" id="GO:0006636">
    <property type="term" value="P:unsaturated fatty acid biosynthetic process"/>
    <property type="evidence" value="ECO:0007669"/>
    <property type="project" value="UniProtKB-UniRule"/>
</dbReference>
<dbReference type="Gene3D" id="3.10.129.10">
    <property type="entry name" value="Hotdog Thioesterase"/>
    <property type="match status" value="1"/>
</dbReference>
<dbReference type="HAMAP" id="MF_00405">
    <property type="entry name" value="FabA"/>
    <property type="match status" value="1"/>
</dbReference>
<dbReference type="InterPro" id="IPR010083">
    <property type="entry name" value="FabA"/>
</dbReference>
<dbReference type="InterPro" id="IPR013114">
    <property type="entry name" value="FabA_FabZ"/>
</dbReference>
<dbReference type="InterPro" id="IPR029069">
    <property type="entry name" value="HotDog_dom_sf"/>
</dbReference>
<dbReference type="NCBIfam" id="TIGR01749">
    <property type="entry name" value="fabA"/>
    <property type="match status" value="1"/>
</dbReference>
<dbReference type="NCBIfam" id="NF003509">
    <property type="entry name" value="PRK05174.1"/>
    <property type="match status" value="1"/>
</dbReference>
<dbReference type="PANTHER" id="PTHR30272">
    <property type="entry name" value="3-HYDROXYACYL-[ACYL-CARRIER-PROTEIN] DEHYDRATASE"/>
    <property type="match status" value="1"/>
</dbReference>
<dbReference type="PANTHER" id="PTHR30272:SF8">
    <property type="entry name" value="3-HYDROXYDECANOYL-[ACYL-CARRIER-PROTEIN] DEHYDRATASE"/>
    <property type="match status" value="1"/>
</dbReference>
<dbReference type="Pfam" id="PF07977">
    <property type="entry name" value="FabA"/>
    <property type="match status" value="1"/>
</dbReference>
<dbReference type="SUPFAM" id="SSF54637">
    <property type="entry name" value="Thioesterase/thiol ester dehydrase-isomerase"/>
    <property type="match status" value="1"/>
</dbReference>
<organism>
    <name type="scientific">Rhodopseudomonas palustris (strain BisB18)</name>
    <dbReference type="NCBI Taxonomy" id="316056"/>
    <lineage>
        <taxon>Bacteria</taxon>
        <taxon>Pseudomonadati</taxon>
        <taxon>Pseudomonadota</taxon>
        <taxon>Alphaproteobacteria</taxon>
        <taxon>Hyphomicrobiales</taxon>
        <taxon>Nitrobacteraceae</taxon>
        <taxon>Rhodopseudomonas</taxon>
    </lineage>
</organism>
<name>FABA_RHOPB</name>